<reference key="1">
    <citation type="submission" date="2005-03" db="EMBL/GenBank/DDBJ databases">
        <title>Comparison of the complete genome sequences of Rhodococcus erythropolis PR4 and Rhodococcus opacus B4.</title>
        <authorList>
            <person name="Takarada H."/>
            <person name="Sekine M."/>
            <person name="Hosoyama A."/>
            <person name="Yamada R."/>
            <person name="Fujisawa T."/>
            <person name="Omata S."/>
            <person name="Shimizu A."/>
            <person name="Tsukatani N."/>
            <person name="Tanikawa S."/>
            <person name="Fujita N."/>
            <person name="Harayama S."/>
        </authorList>
    </citation>
    <scope>NUCLEOTIDE SEQUENCE [LARGE SCALE GENOMIC DNA]</scope>
    <source>
        <strain>PR4 / NBRC 100887</strain>
    </source>
</reference>
<keyword id="KW-0067">ATP-binding</keyword>
<keyword id="KW-0119">Carbohydrate metabolism</keyword>
<keyword id="KW-0320">Glycogen biosynthesis</keyword>
<keyword id="KW-0321">Glycogen metabolism</keyword>
<keyword id="KW-0547">Nucleotide-binding</keyword>
<keyword id="KW-0548">Nucleotidyltransferase</keyword>
<keyword id="KW-0808">Transferase</keyword>
<proteinExistence type="inferred from homology"/>
<name>GLGC_RHOE4</name>
<dbReference type="EC" id="2.7.7.27" evidence="1"/>
<dbReference type="EMBL" id="AP008957">
    <property type="protein sequence ID" value="BAH34868.1"/>
    <property type="molecule type" value="Genomic_DNA"/>
</dbReference>
<dbReference type="RefSeq" id="WP_003945185.1">
    <property type="nucleotide sequence ID" value="NC_012490.1"/>
</dbReference>
<dbReference type="SMR" id="C1A2N3"/>
<dbReference type="GeneID" id="93801638"/>
<dbReference type="KEGG" id="rer:RER_41600"/>
<dbReference type="eggNOG" id="COG0448">
    <property type="taxonomic scope" value="Bacteria"/>
</dbReference>
<dbReference type="HOGENOM" id="CLU_029499_14_1_11"/>
<dbReference type="UniPathway" id="UPA00164"/>
<dbReference type="Proteomes" id="UP000002204">
    <property type="component" value="Chromosome"/>
</dbReference>
<dbReference type="GO" id="GO:0005524">
    <property type="term" value="F:ATP binding"/>
    <property type="evidence" value="ECO:0007669"/>
    <property type="project" value="UniProtKB-KW"/>
</dbReference>
<dbReference type="GO" id="GO:0008878">
    <property type="term" value="F:glucose-1-phosphate adenylyltransferase activity"/>
    <property type="evidence" value="ECO:0007669"/>
    <property type="project" value="UniProtKB-UniRule"/>
</dbReference>
<dbReference type="GO" id="GO:0005978">
    <property type="term" value="P:glycogen biosynthetic process"/>
    <property type="evidence" value="ECO:0007669"/>
    <property type="project" value="UniProtKB-UniRule"/>
</dbReference>
<dbReference type="CDD" id="cd02508">
    <property type="entry name" value="ADP_Glucose_PP"/>
    <property type="match status" value="1"/>
</dbReference>
<dbReference type="CDD" id="cd04651">
    <property type="entry name" value="LbH_G1P_AT_C"/>
    <property type="match status" value="1"/>
</dbReference>
<dbReference type="FunFam" id="3.90.550.10:FF:000014">
    <property type="entry name" value="Glucose-1-phosphate adenylyltransferase"/>
    <property type="match status" value="1"/>
</dbReference>
<dbReference type="Gene3D" id="2.160.10.10">
    <property type="entry name" value="Hexapeptide repeat proteins"/>
    <property type="match status" value="1"/>
</dbReference>
<dbReference type="Gene3D" id="3.90.550.10">
    <property type="entry name" value="Spore Coat Polysaccharide Biosynthesis Protein SpsA, Chain A"/>
    <property type="match status" value="1"/>
</dbReference>
<dbReference type="HAMAP" id="MF_00624">
    <property type="entry name" value="GlgC"/>
    <property type="match status" value="1"/>
</dbReference>
<dbReference type="InterPro" id="IPR011831">
    <property type="entry name" value="ADP-Glc_PPase"/>
</dbReference>
<dbReference type="InterPro" id="IPR005836">
    <property type="entry name" value="ADP_Glu_pyroP_CS"/>
</dbReference>
<dbReference type="InterPro" id="IPR023049">
    <property type="entry name" value="GlgC_bac"/>
</dbReference>
<dbReference type="InterPro" id="IPR056818">
    <property type="entry name" value="GlmU/GlgC-like_hexapep"/>
</dbReference>
<dbReference type="InterPro" id="IPR005835">
    <property type="entry name" value="NTP_transferase_dom"/>
</dbReference>
<dbReference type="InterPro" id="IPR029044">
    <property type="entry name" value="Nucleotide-diphossugar_trans"/>
</dbReference>
<dbReference type="InterPro" id="IPR011004">
    <property type="entry name" value="Trimer_LpxA-like_sf"/>
</dbReference>
<dbReference type="NCBIfam" id="TIGR02091">
    <property type="entry name" value="glgC"/>
    <property type="match status" value="1"/>
</dbReference>
<dbReference type="NCBIfam" id="NF001947">
    <property type="entry name" value="PRK00725.1"/>
    <property type="match status" value="1"/>
</dbReference>
<dbReference type="NCBIfam" id="NF002023">
    <property type="entry name" value="PRK00844.1"/>
    <property type="match status" value="1"/>
</dbReference>
<dbReference type="PANTHER" id="PTHR43523:SF2">
    <property type="entry name" value="GLUCOSE-1-PHOSPHATE ADENYLYLTRANSFERASE"/>
    <property type="match status" value="1"/>
</dbReference>
<dbReference type="PANTHER" id="PTHR43523">
    <property type="entry name" value="GLUCOSE-1-PHOSPHATE ADENYLYLTRANSFERASE-RELATED"/>
    <property type="match status" value="1"/>
</dbReference>
<dbReference type="Pfam" id="PF24894">
    <property type="entry name" value="Hexapep_GlmU"/>
    <property type="match status" value="1"/>
</dbReference>
<dbReference type="Pfam" id="PF00483">
    <property type="entry name" value="NTP_transferase"/>
    <property type="match status" value="1"/>
</dbReference>
<dbReference type="SUPFAM" id="SSF53448">
    <property type="entry name" value="Nucleotide-diphospho-sugar transferases"/>
    <property type="match status" value="1"/>
</dbReference>
<dbReference type="SUPFAM" id="SSF51161">
    <property type="entry name" value="Trimeric LpxA-like enzymes"/>
    <property type="match status" value="1"/>
</dbReference>
<dbReference type="PROSITE" id="PS00808">
    <property type="entry name" value="ADP_GLC_PYROPHOSPH_1"/>
    <property type="match status" value="1"/>
</dbReference>
<dbReference type="PROSITE" id="PS00809">
    <property type="entry name" value="ADP_GLC_PYROPHOSPH_2"/>
    <property type="match status" value="1"/>
</dbReference>
<dbReference type="PROSITE" id="PS00810">
    <property type="entry name" value="ADP_GLC_PYROPHOSPH_3"/>
    <property type="match status" value="1"/>
</dbReference>
<accession>C1A2N3</accession>
<gene>
    <name evidence="1" type="primary">glgC</name>
    <name type="ordered locus">RER_41600</name>
</gene>
<evidence type="ECO:0000255" key="1">
    <source>
        <dbReference type="HAMAP-Rule" id="MF_00624"/>
    </source>
</evidence>
<protein>
    <recommendedName>
        <fullName evidence="1">Glucose-1-phosphate adenylyltransferase</fullName>
        <ecNumber evidence="1">2.7.7.27</ecNumber>
    </recommendedName>
    <alternativeName>
        <fullName evidence="1">ADP-glucose pyrophosphorylase</fullName>
        <shortName evidence="1">ADPGlc PPase</shortName>
    </alternativeName>
    <alternativeName>
        <fullName evidence="1">ADP-glucose synthase</fullName>
    </alternativeName>
</protein>
<organism>
    <name type="scientific">Rhodococcus erythropolis (strain PR4 / NBRC 100887)</name>
    <dbReference type="NCBI Taxonomy" id="234621"/>
    <lineage>
        <taxon>Bacteria</taxon>
        <taxon>Bacillati</taxon>
        <taxon>Actinomycetota</taxon>
        <taxon>Actinomycetes</taxon>
        <taxon>Mycobacteriales</taxon>
        <taxon>Nocardiaceae</taxon>
        <taxon>Rhodococcus</taxon>
        <taxon>Rhodococcus erythropolis group</taxon>
    </lineage>
</organism>
<feature type="chain" id="PRO_1000212303" description="Glucose-1-phosphate adenylyltransferase">
    <location>
        <begin position="1"/>
        <end position="404"/>
    </location>
</feature>
<feature type="binding site" evidence="1">
    <location>
        <position position="99"/>
    </location>
    <ligand>
        <name>alpha-D-glucose 1-phosphate</name>
        <dbReference type="ChEBI" id="CHEBI:58601"/>
    </ligand>
</feature>
<feature type="binding site" evidence="1">
    <location>
        <position position="164"/>
    </location>
    <ligand>
        <name>alpha-D-glucose 1-phosphate</name>
        <dbReference type="ChEBI" id="CHEBI:58601"/>
    </ligand>
</feature>
<feature type="binding site" evidence="1">
    <location>
        <begin position="179"/>
        <end position="180"/>
    </location>
    <ligand>
        <name>alpha-D-glucose 1-phosphate</name>
        <dbReference type="ChEBI" id="CHEBI:58601"/>
    </ligand>
</feature>
<feature type="binding site" evidence="1">
    <location>
        <position position="197"/>
    </location>
    <ligand>
        <name>alpha-D-glucose 1-phosphate</name>
        <dbReference type="ChEBI" id="CHEBI:58601"/>
    </ligand>
</feature>
<sequence>MRSQPHVLGIVLAGGEGKRLYPLTADRAKPAVPFGGAYRLIDFVLSNLVNAGYLRICVLTQYKSHSLDRHISQTWRLSGFAGEYITPVPAQQRLGPRWYTGSADAILQSLNLVYDEDPEYIVVFGADHVYRMDPEQMVQHHIESGAGVTVAGIRVPRSEAFAFGCIDSDESGRITQFLEKPAHPPGTPDDPNSTFASMGNYVFTTKVLVDAIRADSENSDSDHDMGGDIIPALVAAGEASVYDFKDNVVPGATDRDRGYWRDVGTLDAFYDAHMDLVSVHPIFNLYNRRWPIRGATENLAPAKFVKGGLAQESVVGAGSILSAATVRNSVLSSNVMIEDGATVEGSVLMPGVRIGKGAVVRRAILDKNVVVGDGEIIGVDLERDRERFAVSQGGVVAIGKGVWI</sequence>
<comment type="function">
    <text evidence="1">Involved in the biosynthesis of ADP-glucose, a building block required for the elongation reactions to produce glycogen. Catalyzes the reaction between ATP and alpha-D-glucose 1-phosphate (G1P) to produce pyrophosphate and ADP-Glc.</text>
</comment>
<comment type="catalytic activity">
    <reaction evidence="1">
        <text>alpha-D-glucose 1-phosphate + ATP + H(+) = ADP-alpha-D-glucose + diphosphate</text>
        <dbReference type="Rhea" id="RHEA:12120"/>
        <dbReference type="ChEBI" id="CHEBI:15378"/>
        <dbReference type="ChEBI" id="CHEBI:30616"/>
        <dbReference type="ChEBI" id="CHEBI:33019"/>
        <dbReference type="ChEBI" id="CHEBI:57498"/>
        <dbReference type="ChEBI" id="CHEBI:58601"/>
        <dbReference type="EC" id="2.7.7.27"/>
    </reaction>
</comment>
<comment type="pathway">
    <text evidence="1">Glycan biosynthesis; glycogen biosynthesis.</text>
</comment>
<comment type="subunit">
    <text evidence="1">Homotetramer.</text>
</comment>
<comment type="similarity">
    <text evidence="1">Belongs to the bacterial/plant glucose-1-phosphate adenylyltransferase family.</text>
</comment>